<proteinExistence type="evidence at transcript level"/>
<feature type="chain" id="PRO_0000046889" description="Protein odd-skipped-related 1">
    <location>
        <begin position="1"/>
        <end position="242"/>
    </location>
</feature>
<feature type="zinc finger region" description="C2H2-type 1" evidence="1">
    <location>
        <begin position="128"/>
        <end position="150"/>
    </location>
</feature>
<feature type="zinc finger region" description="C2H2-type 2" evidence="1">
    <location>
        <begin position="156"/>
        <end position="178"/>
    </location>
</feature>
<feature type="zinc finger region" description="C2H2-type 3" evidence="1">
    <location>
        <begin position="184"/>
        <end position="207"/>
    </location>
</feature>
<accession>P41995</accession>
<comment type="function">
    <text evidence="2 3">May function as transcription regulator (Probable). Essential for larval development (PubMed:14648222, Ref.3). Required for morphogenesis and function of the digestive tract (PubMed:14648222).</text>
</comment>
<comment type="subcellular location">
    <subcellularLocation>
        <location evidence="4">Nucleus</location>
    </subcellularLocation>
</comment>
<comment type="developmental stage">
    <text evidence="2 3">Expressed in the gut during embryogenesis (PubMed:14648222, Ref.3). Expressed in presumptive intestinal cells and in unidentified cells in the head prior to embryonic elongation (PubMed:14648222). Highly expressed in the most anterior intestinal cell from 1.25-fold stage to 2.5-fold stage (elongating) embryos, but weakly expressed in the remaining intestine in embryos at the 1.25-fold stage (PubMed:14648222). Expressed in additional unidentified cells in the head in 2-fold stage embryos (PubMed:14648222).</text>
</comment>
<comment type="disruption phenotype">
    <text evidence="2">RNAi-mediated knockdown results in defects in feeding, and failed growth and development eventually leading to lethality at the larval stage of development. Morphological and functional defects around the pharyngeal intestinal valve and intestine boundary with multiple cavities surrounding the isthmus of the pharynx in 1 to 2 day old larvae, and accumulation of ingested bacteria in the anterior intestine.</text>
</comment>
<comment type="similarity">
    <text evidence="4">Belongs to the Odd C2H2-type zinc-finger protein family.</text>
</comment>
<name>ODD1_CAEEL</name>
<keyword id="KW-0217">Developmental protein</keyword>
<keyword id="KW-0238">DNA-binding</keyword>
<keyword id="KW-0479">Metal-binding</keyword>
<keyword id="KW-0539">Nucleus</keyword>
<keyword id="KW-1185">Reference proteome</keyword>
<keyword id="KW-0677">Repeat</keyword>
<keyword id="KW-0804">Transcription</keyword>
<keyword id="KW-0805">Transcription regulation</keyword>
<keyword id="KW-0862">Zinc</keyword>
<keyword id="KW-0863">Zinc-finger</keyword>
<dbReference type="EMBL" id="FO080148">
    <property type="protein sequence ID" value="CCD61601.1"/>
    <property type="molecule type" value="Genomic_DNA"/>
</dbReference>
<dbReference type="PIR" id="T15298">
    <property type="entry name" value="T15298"/>
</dbReference>
<dbReference type="RefSeq" id="NP_498552.2">
    <property type="nucleotide sequence ID" value="NM_066151.4"/>
</dbReference>
<dbReference type="SMR" id="P41995"/>
<dbReference type="FunCoup" id="P41995">
    <property type="interactions" value="228"/>
</dbReference>
<dbReference type="STRING" id="6239.B0280.4.1"/>
<dbReference type="PaxDb" id="6239-B0280.4"/>
<dbReference type="EnsemblMetazoa" id="B0280.4.1">
    <property type="protein sequence ID" value="B0280.4.1"/>
    <property type="gene ID" value="WBGene00003845"/>
</dbReference>
<dbReference type="GeneID" id="181893"/>
<dbReference type="KEGG" id="cel:CELE_B0280.4"/>
<dbReference type="UCSC" id="B0280.4">
    <property type="organism name" value="c. elegans"/>
</dbReference>
<dbReference type="AGR" id="WB:WBGene00003845"/>
<dbReference type="CTD" id="181893"/>
<dbReference type="WormBase" id="B0280.4">
    <property type="protein sequence ID" value="CE34633"/>
    <property type="gene ID" value="WBGene00003845"/>
    <property type="gene designation" value="odd-1"/>
</dbReference>
<dbReference type="eggNOG" id="KOG1721">
    <property type="taxonomic scope" value="Eukaryota"/>
</dbReference>
<dbReference type="GeneTree" id="ENSGT00940000172968"/>
<dbReference type="HOGENOM" id="CLU_1148069_0_0_1"/>
<dbReference type="InParanoid" id="P41995"/>
<dbReference type="OMA" id="ACCIVAL"/>
<dbReference type="OrthoDB" id="9451254at2759"/>
<dbReference type="PhylomeDB" id="P41995"/>
<dbReference type="PRO" id="PR:P41995"/>
<dbReference type="Proteomes" id="UP000001940">
    <property type="component" value="Chromosome III"/>
</dbReference>
<dbReference type="Bgee" id="WBGene00003845">
    <property type="expression patterns" value="Expressed in embryo and 3 other cell types or tissues"/>
</dbReference>
<dbReference type="GO" id="GO:0005634">
    <property type="term" value="C:nucleus"/>
    <property type="evidence" value="ECO:0000318"/>
    <property type="project" value="GO_Central"/>
</dbReference>
<dbReference type="GO" id="GO:0000981">
    <property type="term" value="F:DNA-binding transcription factor activity, RNA polymerase II-specific"/>
    <property type="evidence" value="ECO:0000318"/>
    <property type="project" value="GO_Central"/>
</dbReference>
<dbReference type="GO" id="GO:0000977">
    <property type="term" value="F:RNA polymerase II transcription regulatory region sequence-specific DNA binding"/>
    <property type="evidence" value="ECO:0000318"/>
    <property type="project" value="GO_Central"/>
</dbReference>
<dbReference type="GO" id="GO:0008270">
    <property type="term" value="F:zinc ion binding"/>
    <property type="evidence" value="ECO:0007669"/>
    <property type="project" value="UniProtKB-KW"/>
</dbReference>
<dbReference type="GO" id="GO:0000122">
    <property type="term" value="P:negative regulation of transcription by RNA polymerase II"/>
    <property type="evidence" value="ECO:0000318"/>
    <property type="project" value="GO_Central"/>
</dbReference>
<dbReference type="GO" id="GO:0007389">
    <property type="term" value="P:pattern specification process"/>
    <property type="evidence" value="ECO:0000318"/>
    <property type="project" value="GO_Central"/>
</dbReference>
<dbReference type="FunFam" id="3.30.160.60:FF:000090">
    <property type="entry name" value="Odd-skipped-related transciption factor 2"/>
    <property type="match status" value="1"/>
</dbReference>
<dbReference type="FunFam" id="3.30.160.60:FF:000311">
    <property type="entry name" value="protein odd-skipped-related 2 isoform X1"/>
    <property type="match status" value="1"/>
</dbReference>
<dbReference type="FunFam" id="3.30.160.60:FF:000446">
    <property type="entry name" value="Zinc finger protein"/>
    <property type="match status" value="1"/>
</dbReference>
<dbReference type="Gene3D" id="3.30.160.60">
    <property type="entry name" value="Classic Zinc Finger"/>
    <property type="match status" value="3"/>
</dbReference>
<dbReference type="InterPro" id="IPR050717">
    <property type="entry name" value="C2H2-ZF_Transcription_Reg"/>
</dbReference>
<dbReference type="InterPro" id="IPR036236">
    <property type="entry name" value="Znf_C2H2_sf"/>
</dbReference>
<dbReference type="InterPro" id="IPR013087">
    <property type="entry name" value="Znf_C2H2_type"/>
</dbReference>
<dbReference type="PANTHER" id="PTHR14196">
    <property type="entry name" value="ODD-SKIPPED - RELATED"/>
    <property type="match status" value="1"/>
</dbReference>
<dbReference type="PANTHER" id="PTHR14196:SF0">
    <property type="entry name" value="PROTEIN BOWEL"/>
    <property type="match status" value="1"/>
</dbReference>
<dbReference type="Pfam" id="PF00096">
    <property type="entry name" value="zf-C2H2"/>
    <property type="match status" value="2"/>
</dbReference>
<dbReference type="SMART" id="SM00355">
    <property type="entry name" value="ZnF_C2H2"/>
    <property type="match status" value="3"/>
</dbReference>
<dbReference type="SUPFAM" id="SSF57667">
    <property type="entry name" value="beta-beta-alpha zinc fingers"/>
    <property type="match status" value="2"/>
</dbReference>
<dbReference type="PROSITE" id="PS00028">
    <property type="entry name" value="ZINC_FINGER_C2H2_1"/>
    <property type="match status" value="3"/>
</dbReference>
<dbReference type="PROSITE" id="PS50157">
    <property type="entry name" value="ZINC_FINGER_C2H2_2"/>
    <property type="match status" value="3"/>
</dbReference>
<sequence length="242" mass="27548">MTLPWNTFPGSTVPPVVPSVEDIIRMLVAGQQKIAIQNLLQSQSKEQVNGTSHDLQNWLTSLCISPSSSPTPSNASTSTIPAQMTNENVLHLQIQSQLFSNLGTPWFLNPEQHNKTNNAIRKRPKKEFICKYCARHFTKSYNLMIHERTHTNERPFHCETCGKSFRRQDHLRDHKYIHAKEKPHKCEICGKGFCQLRTLNVHRSCHHVQEPISETFMLGAIKFGKADSLLIDAEPLIDVTTI</sequence>
<evidence type="ECO:0000255" key="1">
    <source>
        <dbReference type="PROSITE-ProRule" id="PRU00042"/>
    </source>
</evidence>
<evidence type="ECO:0000269" key="2">
    <source>
    </source>
</evidence>
<evidence type="ECO:0000269" key="3">
    <source ref="3"/>
</evidence>
<evidence type="ECO:0000305" key="4"/>
<evidence type="ECO:0000312" key="5">
    <source>
        <dbReference type="WormBase" id="B0280.4"/>
    </source>
</evidence>
<gene>
    <name evidence="5" type="primary">odd-1</name>
    <name evidence="5" type="ORF">B0280.4</name>
</gene>
<organism>
    <name type="scientific">Caenorhabditis elegans</name>
    <dbReference type="NCBI Taxonomy" id="6239"/>
    <lineage>
        <taxon>Eukaryota</taxon>
        <taxon>Metazoa</taxon>
        <taxon>Ecdysozoa</taxon>
        <taxon>Nematoda</taxon>
        <taxon>Chromadorea</taxon>
        <taxon>Rhabditida</taxon>
        <taxon>Rhabditina</taxon>
        <taxon>Rhabditomorpha</taxon>
        <taxon>Rhabditoidea</taxon>
        <taxon>Rhabditidae</taxon>
        <taxon>Peloderinae</taxon>
        <taxon>Caenorhabditis</taxon>
    </lineage>
</organism>
<reference key="1">
    <citation type="journal article" date="1998" name="Science">
        <title>Genome sequence of the nematode C. elegans: a platform for investigating biology.</title>
        <authorList>
            <consortium name="The C. elegans sequencing consortium"/>
        </authorList>
    </citation>
    <scope>NUCLEOTIDE SEQUENCE [LARGE SCALE GENOMIC DNA]</scope>
    <source>
        <strain>Bristol N2</strain>
    </source>
</reference>
<reference key="2">
    <citation type="journal article" date="2004" name="Dev. Genes Evol.">
        <title>Odd-skipped homologs function during gut development in C. elegans.</title>
        <authorList>
            <person name="Buckley M.S."/>
            <person name="Chau J."/>
            <person name="Hoppe P.E."/>
            <person name="Coulter D.E."/>
        </authorList>
    </citation>
    <scope>FUNCTION</scope>
    <scope>DEVELOPMENTAL STAGE</scope>
    <scope>DISRUPTION PHENOTYPE</scope>
</reference>
<reference key="3">
    <citation type="unpublished observations" date="2000-06">
        <authorList>
            <person name="Rothman J.H."/>
            <person name="Maduro M.F."/>
            <person name="Strohmaier K."/>
        </authorList>
    </citation>
    <scope>FUNCTION</scope>
    <scope>DEVELOPMENTAL STAGE</scope>
</reference>
<protein>
    <recommendedName>
        <fullName evidence="4">Protein odd-skipped-related 1</fullName>
    </recommendedName>
</protein>